<proteinExistence type="inferred from homology"/>
<feature type="chain" id="PRO_1000054145" description="Cyclic pyranopterin monophosphate synthase">
    <location>
        <begin position="1"/>
        <end position="161"/>
    </location>
</feature>
<feature type="active site" evidence="1">
    <location>
        <position position="128"/>
    </location>
</feature>
<feature type="binding site" evidence="1">
    <location>
        <begin position="75"/>
        <end position="77"/>
    </location>
    <ligand>
        <name>substrate</name>
    </ligand>
</feature>
<feature type="binding site" evidence="1">
    <location>
        <begin position="113"/>
        <end position="114"/>
    </location>
    <ligand>
        <name>substrate</name>
    </ligand>
</feature>
<sequence length="161" mass="17467">MSQLTHINAAGEAHMVDVSAKAETVREARAEAFVTMRSETLAMIIDGRHHKGDVFATARIAGIQAAKRTWDLIPLCHPLMLSKVEVNLQAEPEHNRVRIETLCRLTGKTGVEMEALTAASVAALTIYDMCKAVQKDMVIGPVRLLAKSGGKSGDFKVEADD</sequence>
<gene>
    <name evidence="1" type="primary">moaC</name>
    <name type="ordered locus">SFV_0766</name>
</gene>
<comment type="function">
    <text evidence="1">Catalyzes the conversion of (8S)-3',8-cyclo-7,8-dihydroguanosine 5'-triphosphate to cyclic pyranopterin monophosphate (cPMP).</text>
</comment>
<comment type="catalytic activity">
    <reaction evidence="1">
        <text>(8S)-3',8-cyclo-7,8-dihydroguanosine 5'-triphosphate = cyclic pyranopterin phosphate + diphosphate</text>
        <dbReference type="Rhea" id="RHEA:49580"/>
        <dbReference type="ChEBI" id="CHEBI:33019"/>
        <dbReference type="ChEBI" id="CHEBI:59648"/>
        <dbReference type="ChEBI" id="CHEBI:131766"/>
        <dbReference type="EC" id="4.6.1.17"/>
    </reaction>
</comment>
<comment type="pathway">
    <text evidence="1">Cofactor biosynthesis; molybdopterin biosynthesis.</text>
</comment>
<comment type="subunit">
    <text evidence="1">Homohexamer; trimer of dimers.</text>
</comment>
<comment type="similarity">
    <text evidence="1">Belongs to the MoaC family.</text>
</comment>
<dbReference type="EC" id="4.6.1.17" evidence="1"/>
<dbReference type="EMBL" id="CP000266">
    <property type="protein sequence ID" value="ABF02999.1"/>
    <property type="molecule type" value="Genomic_DNA"/>
</dbReference>
<dbReference type="RefSeq" id="WP_000080885.1">
    <property type="nucleotide sequence ID" value="NC_008258.1"/>
</dbReference>
<dbReference type="SMR" id="Q0T6H7"/>
<dbReference type="GeneID" id="86945666"/>
<dbReference type="KEGG" id="sfv:SFV_0766"/>
<dbReference type="HOGENOM" id="CLU_074693_1_1_6"/>
<dbReference type="UniPathway" id="UPA00344"/>
<dbReference type="Proteomes" id="UP000000659">
    <property type="component" value="Chromosome"/>
</dbReference>
<dbReference type="GO" id="GO:0061799">
    <property type="term" value="F:cyclic pyranopterin monophosphate synthase activity"/>
    <property type="evidence" value="ECO:0007669"/>
    <property type="project" value="UniProtKB-UniRule"/>
</dbReference>
<dbReference type="GO" id="GO:0006777">
    <property type="term" value="P:Mo-molybdopterin cofactor biosynthetic process"/>
    <property type="evidence" value="ECO:0007669"/>
    <property type="project" value="UniProtKB-UniRule"/>
</dbReference>
<dbReference type="CDD" id="cd01420">
    <property type="entry name" value="MoaC_PE"/>
    <property type="match status" value="1"/>
</dbReference>
<dbReference type="FunFam" id="3.30.70.640:FF:000001">
    <property type="entry name" value="Cyclic pyranopterin monophosphate synthase"/>
    <property type="match status" value="1"/>
</dbReference>
<dbReference type="Gene3D" id="3.30.70.640">
    <property type="entry name" value="Molybdopterin cofactor biosynthesis C (MoaC) domain"/>
    <property type="match status" value="1"/>
</dbReference>
<dbReference type="HAMAP" id="MF_01224_B">
    <property type="entry name" value="MoaC_B"/>
    <property type="match status" value="1"/>
</dbReference>
<dbReference type="InterPro" id="IPR023045">
    <property type="entry name" value="MoaC"/>
</dbReference>
<dbReference type="InterPro" id="IPR047594">
    <property type="entry name" value="MoaC_bact/euk"/>
</dbReference>
<dbReference type="InterPro" id="IPR036522">
    <property type="entry name" value="MoaC_sf"/>
</dbReference>
<dbReference type="InterPro" id="IPR050105">
    <property type="entry name" value="MoCo_biosynth_MoaA/MoaC"/>
</dbReference>
<dbReference type="InterPro" id="IPR002820">
    <property type="entry name" value="Mopterin_CF_biosynth-C_dom"/>
</dbReference>
<dbReference type="NCBIfam" id="TIGR00581">
    <property type="entry name" value="moaC"/>
    <property type="match status" value="1"/>
</dbReference>
<dbReference type="NCBIfam" id="NF006870">
    <property type="entry name" value="PRK09364.1"/>
    <property type="match status" value="1"/>
</dbReference>
<dbReference type="PANTHER" id="PTHR22960">
    <property type="entry name" value="MOLYBDOPTERIN COFACTOR SYNTHESIS PROTEIN A"/>
    <property type="match status" value="1"/>
</dbReference>
<dbReference type="Pfam" id="PF01967">
    <property type="entry name" value="MoaC"/>
    <property type="match status" value="1"/>
</dbReference>
<dbReference type="SUPFAM" id="SSF55040">
    <property type="entry name" value="Molybdenum cofactor biosynthesis protein C, MoaC"/>
    <property type="match status" value="1"/>
</dbReference>
<organism>
    <name type="scientific">Shigella flexneri serotype 5b (strain 8401)</name>
    <dbReference type="NCBI Taxonomy" id="373384"/>
    <lineage>
        <taxon>Bacteria</taxon>
        <taxon>Pseudomonadati</taxon>
        <taxon>Pseudomonadota</taxon>
        <taxon>Gammaproteobacteria</taxon>
        <taxon>Enterobacterales</taxon>
        <taxon>Enterobacteriaceae</taxon>
        <taxon>Shigella</taxon>
    </lineage>
</organism>
<name>MOAC_SHIF8</name>
<accession>Q0T6H7</accession>
<reference key="1">
    <citation type="journal article" date="2006" name="BMC Genomics">
        <title>Complete genome sequence of Shigella flexneri 5b and comparison with Shigella flexneri 2a.</title>
        <authorList>
            <person name="Nie H."/>
            <person name="Yang F."/>
            <person name="Zhang X."/>
            <person name="Yang J."/>
            <person name="Chen L."/>
            <person name="Wang J."/>
            <person name="Xiong Z."/>
            <person name="Peng J."/>
            <person name="Sun L."/>
            <person name="Dong J."/>
            <person name="Xue Y."/>
            <person name="Xu X."/>
            <person name="Chen S."/>
            <person name="Yao Z."/>
            <person name="Shen Y."/>
            <person name="Jin Q."/>
        </authorList>
    </citation>
    <scope>NUCLEOTIDE SEQUENCE [LARGE SCALE GENOMIC DNA]</scope>
    <source>
        <strain>8401</strain>
    </source>
</reference>
<evidence type="ECO:0000255" key="1">
    <source>
        <dbReference type="HAMAP-Rule" id="MF_01224"/>
    </source>
</evidence>
<protein>
    <recommendedName>
        <fullName evidence="1">Cyclic pyranopterin monophosphate synthase</fullName>
        <ecNumber evidence="1">4.6.1.17</ecNumber>
    </recommendedName>
    <alternativeName>
        <fullName evidence="1">Molybdenum cofactor biosynthesis protein C</fullName>
    </alternativeName>
</protein>
<keyword id="KW-0456">Lyase</keyword>
<keyword id="KW-0501">Molybdenum cofactor biosynthesis</keyword>